<evidence type="ECO:0000255" key="1">
    <source>
        <dbReference type="HAMAP-Rule" id="MF_01123"/>
    </source>
</evidence>
<reference key="1">
    <citation type="journal article" date="2005" name="Infect. Immun.">
        <title>Whole-genome analyses of speciation events in pathogenic Brucellae.</title>
        <authorList>
            <person name="Chain P.S."/>
            <person name="Comerci D.J."/>
            <person name="Tolmasky M.E."/>
            <person name="Larimer F.W."/>
            <person name="Malfatti S.A."/>
            <person name="Vergez L.M."/>
            <person name="Aguero F."/>
            <person name="Land M.L."/>
            <person name="Ugalde R.A."/>
            <person name="Garcia E."/>
        </authorList>
    </citation>
    <scope>NUCLEOTIDE SEQUENCE [LARGE SCALE GENOMIC DNA]</scope>
    <source>
        <strain>2308</strain>
    </source>
</reference>
<organism>
    <name type="scientific">Brucella abortus (strain 2308)</name>
    <dbReference type="NCBI Taxonomy" id="359391"/>
    <lineage>
        <taxon>Bacteria</taxon>
        <taxon>Pseudomonadati</taxon>
        <taxon>Pseudomonadota</taxon>
        <taxon>Alphaproteobacteria</taxon>
        <taxon>Hyphomicrobiales</taxon>
        <taxon>Brucellaceae</taxon>
        <taxon>Brucella/Ochrobactrum group</taxon>
        <taxon>Brucella</taxon>
    </lineage>
</organism>
<proteinExistence type="inferred from homology"/>
<name>ACSA_BRUA2</name>
<feature type="chain" id="PRO_1000065274" description="Acetyl-coenzyme A synthetase">
    <location>
        <begin position="1"/>
        <end position="651"/>
    </location>
</feature>
<feature type="binding site" evidence="1">
    <location>
        <begin position="189"/>
        <end position="192"/>
    </location>
    <ligand>
        <name>CoA</name>
        <dbReference type="ChEBI" id="CHEBI:57287"/>
    </ligand>
</feature>
<feature type="binding site" evidence="1">
    <location>
        <position position="311"/>
    </location>
    <ligand>
        <name>CoA</name>
        <dbReference type="ChEBI" id="CHEBI:57287"/>
    </ligand>
</feature>
<feature type="binding site" evidence="1">
    <location>
        <position position="335"/>
    </location>
    <ligand>
        <name>CoA</name>
        <dbReference type="ChEBI" id="CHEBI:57287"/>
    </ligand>
</feature>
<feature type="binding site" evidence="1">
    <location>
        <begin position="387"/>
        <end position="389"/>
    </location>
    <ligand>
        <name>ATP</name>
        <dbReference type="ChEBI" id="CHEBI:30616"/>
    </ligand>
</feature>
<feature type="binding site" evidence="1">
    <location>
        <begin position="411"/>
        <end position="416"/>
    </location>
    <ligand>
        <name>ATP</name>
        <dbReference type="ChEBI" id="CHEBI:30616"/>
    </ligand>
</feature>
<feature type="binding site" evidence="1">
    <location>
        <position position="500"/>
    </location>
    <ligand>
        <name>ATP</name>
        <dbReference type="ChEBI" id="CHEBI:30616"/>
    </ligand>
</feature>
<feature type="binding site" evidence="1">
    <location>
        <position position="515"/>
    </location>
    <ligand>
        <name>ATP</name>
        <dbReference type="ChEBI" id="CHEBI:30616"/>
    </ligand>
</feature>
<feature type="binding site" evidence="1">
    <location>
        <position position="523"/>
    </location>
    <ligand>
        <name>CoA</name>
        <dbReference type="ChEBI" id="CHEBI:57287"/>
    </ligand>
</feature>
<feature type="binding site" evidence="1">
    <location>
        <position position="526"/>
    </location>
    <ligand>
        <name>ATP</name>
        <dbReference type="ChEBI" id="CHEBI:30616"/>
    </ligand>
</feature>
<feature type="binding site" evidence="1">
    <location>
        <position position="537"/>
    </location>
    <ligand>
        <name>Mg(2+)</name>
        <dbReference type="ChEBI" id="CHEBI:18420"/>
    </ligand>
</feature>
<feature type="binding site" evidence="1">
    <location>
        <position position="539"/>
    </location>
    <ligand>
        <name>Mg(2+)</name>
        <dbReference type="ChEBI" id="CHEBI:18420"/>
    </ligand>
</feature>
<feature type="binding site" evidence="1">
    <location>
        <position position="542"/>
    </location>
    <ligand>
        <name>Mg(2+)</name>
        <dbReference type="ChEBI" id="CHEBI:18420"/>
    </ligand>
</feature>
<feature type="binding site">
    <location>
        <position position="586"/>
    </location>
    <ligand>
        <name>CoA</name>
        <dbReference type="ChEBI" id="CHEBI:57287"/>
    </ligand>
</feature>
<feature type="modified residue" description="N6-acetyllysine" evidence="1">
    <location>
        <position position="611"/>
    </location>
</feature>
<protein>
    <recommendedName>
        <fullName evidence="1">Acetyl-coenzyme A synthetase</fullName>
        <shortName evidence="1">AcCoA synthetase</shortName>
        <shortName evidence="1">Acs</shortName>
        <ecNumber evidence="1">6.2.1.1</ecNumber>
    </recommendedName>
    <alternativeName>
        <fullName evidence="1">Acetate--CoA ligase</fullName>
    </alternativeName>
    <alternativeName>
        <fullName evidence="1">Acyl-activating enzyme</fullName>
    </alternativeName>
</protein>
<sequence length="651" mass="72731">MSEKLYPVLPEAKKNTLIDNETYLEWYEESVSDPDGFWAKHGRRIDWFKPFTKVKNTDFNGDVTIKWYEDGVTNVSYNCIDRHLKSRGDKVAIIWEGDNPYIDKKITYRELYENVCRMANVLKKHGVKKGDRVTIYLPMIPEAAYAMLACARIGAVHSVVFAGFSPEALAGRIVDCESTFVITADEGVRGGKPVALKENTDTAIDIAAKQYVMVNKVLVVRRTGGKVSWGRGRDLWYHQEVASVEPHCEPEPMNAEDPLFILYTSGSTGKPKGVLHTTGGYLVYASMTHQYVFDYHDGEIYWCTADVGWVTGHSYIVYGPLANGATTLMFEGVPNFPDQGRFWEVVDKHHVNIFYTAPTALRALMGAGDEFVTRSSRSTLRLLGSVGEPINPEAWEWYYNVVGDQKCPIVDTWWQTENGGILITPLPGATDLKPGSATRPFFGVKPVLVDNEGNVQEGVADGNLCISDSWPGQMRTVYGDHKRFIETYFSTYKGMYFSGDGCRRDEDGYYWITGRVDDVLNISGHRLGTAEIESALVSHHSVSEAAVVGYPHPIKGQGIYCYVTLMTGADAQDPDELRKELVQHVRKEIGPIATPDKIQFAPGLPKTRSGKIMRRILRKIAEDEFGALGDTSTLADPGVVDDLIENRQNKK</sequence>
<gene>
    <name evidence="1" type="primary">acsA</name>
    <name type="ordered locus">BAB1_1819</name>
</gene>
<dbReference type="EC" id="6.2.1.1" evidence="1"/>
<dbReference type="EMBL" id="AM040264">
    <property type="protein sequence ID" value="CAJ11775.1"/>
    <property type="molecule type" value="Genomic_DNA"/>
</dbReference>
<dbReference type="SMR" id="Q2YLH5"/>
<dbReference type="STRING" id="359391.BAB1_1819"/>
<dbReference type="KEGG" id="bmf:BAB1_1819"/>
<dbReference type="PATRIC" id="fig|359391.11.peg.329"/>
<dbReference type="HOGENOM" id="CLU_000022_3_6_5"/>
<dbReference type="Proteomes" id="UP000002719">
    <property type="component" value="Chromosome I"/>
</dbReference>
<dbReference type="GO" id="GO:0005829">
    <property type="term" value="C:cytosol"/>
    <property type="evidence" value="ECO:0007669"/>
    <property type="project" value="TreeGrafter"/>
</dbReference>
<dbReference type="GO" id="GO:0003987">
    <property type="term" value="F:acetate-CoA ligase activity"/>
    <property type="evidence" value="ECO:0007669"/>
    <property type="project" value="UniProtKB-UniRule"/>
</dbReference>
<dbReference type="GO" id="GO:0016208">
    <property type="term" value="F:AMP binding"/>
    <property type="evidence" value="ECO:0007669"/>
    <property type="project" value="InterPro"/>
</dbReference>
<dbReference type="GO" id="GO:0005524">
    <property type="term" value="F:ATP binding"/>
    <property type="evidence" value="ECO:0007669"/>
    <property type="project" value="UniProtKB-KW"/>
</dbReference>
<dbReference type="GO" id="GO:0046872">
    <property type="term" value="F:metal ion binding"/>
    <property type="evidence" value="ECO:0007669"/>
    <property type="project" value="UniProtKB-KW"/>
</dbReference>
<dbReference type="GO" id="GO:0019427">
    <property type="term" value="P:acetyl-CoA biosynthetic process from acetate"/>
    <property type="evidence" value="ECO:0007669"/>
    <property type="project" value="InterPro"/>
</dbReference>
<dbReference type="CDD" id="cd05966">
    <property type="entry name" value="ACS"/>
    <property type="match status" value="1"/>
</dbReference>
<dbReference type="FunFam" id="3.30.300.30:FF:000004">
    <property type="entry name" value="Acetyl-coenzyme A synthetase"/>
    <property type="match status" value="1"/>
</dbReference>
<dbReference type="FunFam" id="3.40.50.12780:FF:000001">
    <property type="entry name" value="Acetyl-coenzyme A synthetase"/>
    <property type="match status" value="1"/>
</dbReference>
<dbReference type="Gene3D" id="3.30.300.30">
    <property type="match status" value="1"/>
</dbReference>
<dbReference type="Gene3D" id="3.40.50.12780">
    <property type="entry name" value="N-terminal domain of ligase-like"/>
    <property type="match status" value="1"/>
</dbReference>
<dbReference type="HAMAP" id="MF_01123">
    <property type="entry name" value="Ac_CoA_synth"/>
    <property type="match status" value="1"/>
</dbReference>
<dbReference type="InterPro" id="IPR011904">
    <property type="entry name" value="Ac_CoA_lig"/>
</dbReference>
<dbReference type="InterPro" id="IPR032387">
    <property type="entry name" value="ACAS_N"/>
</dbReference>
<dbReference type="InterPro" id="IPR025110">
    <property type="entry name" value="AMP-bd_C"/>
</dbReference>
<dbReference type="InterPro" id="IPR045851">
    <property type="entry name" value="AMP-bd_C_sf"/>
</dbReference>
<dbReference type="InterPro" id="IPR020845">
    <property type="entry name" value="AMP-binding_CS"/>
</dbReference>
<dbReference type="InterPro" id="IPR000873">
    <property type="entry name" value="AMP-dep_synth/lig_dom"/>
</dbReference>
<dbReference type="InterPro" id="IPR042099">
    <property type="entry name" value="ANL_N_sf"/>
</dbReference>
<dbReference type="NCBIfam" id="TIGR02188">
    <property type="entry name" value="Ac_CoA_lig_AcsA"/>
    <property type="match status" value="1"/>
</dbReference>
<dbReference type="NCBIfam" id="NF001208">
    <property type="entry name" value="PRK00174.1"/>
    <property type="match status" value="1"/>
</dbReference>
<dbReference type="PANTHER" id="PTHR24095">
    <property type="entry name" value="ACETYL-COENZYME A SYNTHETASE"/>
    <property type="match status" value="1"/>
</dbReference>
<dbReference type="PANTHER" id="PTHR24095:SF14">
    <property type="entry name" value="ACETYL-COENZYME A SYNTHETASE 1"/>
    <property type="match status" value="1"/>
</dbReference>
<dbReference type="Pfam" id="PF16177">
    <property type="entry name" value="ACAS_N"/>
    <property type="match status" value="1"/>
</dbReference>
<dbReference type="Pfam" id="PF00501">
    <property type="entry name" value="AMP-binding"/>
    <property type="match status" value="1"/>
</dbReference>
<dbReference type="Pfam" id="PF13193">
    <property type="entry name" value="AMP-binding_C"/>
    <property type="match status" value="1"/>
</dbReference>
<dbReference type="SUPFAM" id="SSF56801">
    <property type="entry name" value="Acetyl-CoA synthetase-like"/>
    <property type="match status" value="1"/>
</dbReference>
<dbReference type="PROSITE" id="PS00455">
    <property type="entry name" value="AMP_BINDING"/>
    <property type="match status" value="1"/>
</dbReference>
<comment type="function">
    <text evidence="1">Catalyzes the conversion of acetate into acetyl-CoA (AcCoA), an essential intermediate at the junction of anabolic and catabolic pathways. AcsA undergoes a two-step reaction. In the first half reaction, AcsA combines acetate with ATP to form acetyl-adenylate (AcAMP) intermediate. In the second half reaction, it can then transfer the acetyl group from AcAMP to the sulfhydryl group of CoA, forming the product AcCoA.</text>
</comment>
<comment type="catalytic activity">
    <reaction evidence="1">
        <text>acetate + ATP + CoA = acetyl-CoA + AMP + diphosphate</text>
        <dbReference type="Rhea" id="RHEA:23176"/>
        <dbReference type="ChEBI" id="CHEBI:30089"/>
        <dbReference type="ChEBI" id="CHEBI:30616"/>
        <dbReference type="ChEBI" id="CHEBI:33019"/>
        <dbReference type="ChEBI" id="CHEBI:57287"/>
        <dbReference type="ChEBI" id="CHEBI:57288"/>
        <dbReference type="ChEBI" id="CHEBI:456215"/>
        <dbReference type="EC" id="6.2.1.1"/>
    </reaction>
</comment>
<comment type="cofactor">
    <cofactor evidence="1">
        <name>Mg(2+)</name>
        <dbReference type="ChEBI" id="CHEBI:18420"/>
    </cofactor>
</comment>
<comment type="PTM">
    <text evidence="1">Acetylated. Deacetylation by the SIR2-homolog deacetylase activates the enzyme.</text>
</comment>
<comment type="similarity">
    <text evidence="1">Belongs to the ATP-dependent AMP-binding enzyme family.</text>
</comment>
<accession>Q2YLH5</accession>
<keyword id="KW-0007">Acetylation</keyword>
<keyword id="KW-0067">ATP-binding</keyword>
<keyword id="KW-0436">Ligase</keyword>
<keyword id="KW-0460">Magnesium</keyword>
<keyword id="KW-0479">Metal-binding</keyword>
<keyword id="KW-0547">Nucleotide-binding</keyword>
<keyword id="KW-1185">Reference proteome</keyword>